<name>RK22_CYAPA</name>
<keyword id="KW-0194">Cyanelle</keyword>
<keyword id="KW-0934">Plastid</keyword>
<keyword id="KW-0687">Ribonucleoprotein</keyword>
<keyword id="KW-0689">Ribosomal protein</keyword>
<keyword id="KW-0694">RNA-binding</keyword>
<keyword id="KW-0699">rRNA-binding</keyword>
<reference key="1">
    <citation type="journal article" date="1995" name="Plant Mol. Biol. Rep.">
        <title>Nucleotide sequence of the cyanelle DNA from Cyanophora paradoxa.</title>
        <authorList>
            <person name="Stirewalt V.L."/>
            <person name="Michalowski C.B."/>
            <person name="Loeffelhardt W."/>
            <person name="Bohnert H.J."/>
            <person name="Bryant D.A."/>
        </authorList>
    </citation>
    <scope>NUCLEOTIDE SEQUENCE [LARGE SCALE GENOMIC DNA]</scope>
    <source>
        <strain>UTEX LB 555 / Pringsheim</strain>
    </source>
</reference>
<reference key="2">
    <citation type="book" date="1997" name="Eukaryotism and symbiosis">
        <title>The complete sequence of the cyanelle genome of Cyanophora paradoxa: the genetic complexity of a primitive plastid.</title>
        <editorList>
            <person name="Schenk H.E.A."/>
            <person name="Herrmann R."/>
            <person name="Jeon K.W."/>
            <person name="Mueller N.E."/>
            <person name="Schwemmler W."/>
        </editorList>
        <authorList>
            <person name="Loeffelhardt W."/>
            <person name="Stirewalt V.L."/>
            <person name="Michalowski C.B."/>
            <person name="Annarella M."/>
            <person name="Farley J.Y."/>
            <person name="Schluchter W.M."/>
            <person name="Chung S."/>
            <person name="Newmann-Spallart C."/>
            <person name="Steiner J.M."/>
            <person name="Jakowitsch J."/>
            <person name="Bohnert H.J."/>
            <person name="Bryant D.A."/>
        </authorList>
    </citation>
    <scope>NUCLEOTIDE SEQUENCE [LARGE SCALE GENOMIC DNA]</scope>
    <source>
        <strain>UTEX LB 555 / Pringsheim</strain>
    </source>
</reference>
<reference key="3">
    <citation type="journal article" date="1990" name="J. Mol. Evol.">
        <title>The nucleotide sequence of five ribosomal protein genes from the cyanelles of Cyanophora paradoxa: implications concerning the phylogenetic relationship between cyanelles and chloroplasts.</title>
        <authorList>
            <person name="Evrard J.L."/>
            <person name="Kuntz M."/>
            <person name="Weil J.H."/>
        </authorList>
    </citation>
    <scope>NUCLEOTIDE SEQUENCE [GENOMIC DNA] OF 1-57</scope>
    <source>
        <strain>UTEX LB 555 / Pringsheim</strain>
    </source>
</reference>
<reference key="4">
    <citation type="journal article" date="1990" name="Mol. Gen. Genet.">
        <title>The cyanelle S10 spc ribosomal protein gene operon from Cyanophora paradoxa.</title>
        <authorList>
            <person name="Michalowski C.B."/>
            <person name="Pfanzagl B."/>
            <person name="Loeffelhardt W."/>
            <person name="Bohnert H.J."/>
        </authorList>
    </citation>
    <scope>NUCLEOTIDE SEQUENCE [GENOMIC DNA] OF 56-114</scope>
    <source>
        <strain>UTEX 5550</strain>
    </source>
</reference>
<feature type="chain" id="PRO_0000125292" description="Large ribosomal subunit protein uL22c">
    <location>
        <begin position="1"/>
        <end position="114"/>
    </location>
</feature>
<feature type="sequence conflict" description="In Ref. 4." evidence="2" ref="4">
    <location>
        <position position="58"/>
    </location>
</feature>
<gene>
    <name type="primary">rpl22</name>
</gene>
<geneLocation type="cyanelle"/>
<organism>
    <name type="scientific">Cyanophora paradoxa</name>
    <dbReference type="NCBI Taxonomy" id="2762"/>
    <lineage>
        <taxon>Eukaryota</taxon>
        <taxon>Glaucocystophyceae</taxon>
        <taxon>Cyanophoraceae</taxon>
        <taxon>Cyanophora</taxon>
    </lineage>
</organism>
<proteinExistence type="inferred from homology"/>
<accession>P15768</accession>
<sequence length="114" mass="12806">MATEVKAIAKYVRTSPQKVRRILDQIRGKSYKEAVMLLSVMPYKACSIILKIVDSAAANAQVTKGFNKNKLIISKTFVDKGPTLKRFRPRAQGRGYKILKPTCHITVQVQDQSL</sequence>
<evidence type="ECO:0000250" key="1"/>
<evidence type="ECO:0000305" key="2"/>
<comment type="function">
    <text evidence="1">This protein binds specifically to 23S rRNA.</text>
</comment>
<comment type="function">
    <text evidence="1">The globular domain of the protein is located near the polypeptide exit tunnel on the outside of the subunit, while an extended beta-hairpin is found that lines the wall of the exit tunnel in the center of the 70S ribosome.</text>
</comment>
<comment type="subunit">
    <text>Part of the 50S ribosomal subunit.</text>
</comment>
<comment type="subcellular location">
    <subcellularLocation>
        <location>Plastid</location>
        <location>Cyanelle</location>
    </subcellularLocation>
</comment>
<comment type="similarity">
    <text evidence="2">Belongs to the universal ribosomal protein uL22 family.</text>
</comment>
<protein>
    <recommendedName>
        <fullName evidence="2">Large ribosomal subunit protein uL22c</fullName>
    </recommendedName>
    <alternativeName>
        <fullName>50S ribosomal protein L22, cyanelle</fullName>
    </alternativeName>
</protein>
<dbReference type="EMBL" id="U30821">
    <property type="protein sequence ID" value="AAA81228.1"/>
    <property type="molecule type" value="Genomic_DNA"/>
</dbReference>
<dbReference type="EMBL" id="X17498">
    <property type="protein sequence ID" value="CAA35539.1"/>
    <property type="molecule type" value="Genomic_DNA"/>
</dbReference>
<dbReference type="EMBL" id="M30487">
    <property type="protein sequence ID" value="AAA63620.1"/>
    <property type="molecule type" value="Genomic_DNA"/>
</dbReference>
<dbReference type="PIR" id="T06885">
    <property type="entry name" value="T06885"/>
</dbReference>
<dbReference type="RefSeq" id="NP_043197.1">
    <property type="nucleotide sequence ID" value="NC_001675.1"/>
</dbReference>
<dbReference type="SMR" id="P15768"/>
<dbReference type="GeneID" id="801606"/>
<dbReference type="GO" id="GO:0009842">
    <property type="term" value="C:cyanelle"/>
    <property type="evidence" value="ECO:0007669"/>
    <property type="project" value="UniProtKB-SubCell"/>
</dbReference>
<dbReference type="GO" id="GO:0015934">
    <property type="term" value="C:large ribosomal subunit"/>
    <property type="evidence" value="ECO:0007669"/>
    <property type="project" value="InterPro"/>
</dbReference>
<dbReference type="GO" id="GO:0019843">
    <property type="term" value="F:rRNA binding"/>
    <property type="evidence" value="ECO:0007669"/>
    <property type="project" value="UniProtKB-KW"/>
</dbReference>
<dbReference type="GO" id="GO:0003735">
    <property type="term" value="F:structural constituent of ribosome"/>
    <property type="evidence" value="ECO:0007669"/>
    <property type="project" value="InterPro"/>
</dbReference>
<dbReference type="GO" id="GO:0006412">
    <property type="term" value="P:translation"/>
    <property type="evidence" value="ECO:0007669"/>
    <property type="project" value="InterPro"/>
</dbReference>
<dbReference type="CDD" id="cd00336">
    <property type="entry name" value="Ribosomal_L22"/>
    <property type="match status" value="1"/>
</dbReference>
<dbReference type="Gene3D" id="3.90.470.10">
    <property type="entry name" value="Ribosomal protein L22/L17"/>
    <property type="match status" value="1"/>
</dbReference>
<dbReference type="HAMAP" id="MF_01331_B">
    <property type="entry name" value="Ribosomal_uL22_B"/>
    <property type="match status" value="1"/>
</dbReference>
<dbReference type="InterPro" id="IPR001063">
    <property type="entry name" value="Ribosomal_uL22"/>
</dbReference>
<dbReference type="InterPro" id="IPR005727">
    <property type="entry name" value="Ribosomal_uL22_bac/chlpt-type"/>
</dbReference>
<dbReference type="InterPro" id="IPR047867">
    <property type="entry name" value="Ribosomal_uL22_bac/org-type"/>
</dbReference>
<dbReference type="InterPro" id="IPR018260">
    <property type="entry name" value="Ribosomal_uL22_CS"/>
</dbReference>
<dbReference type="InterPro" id="IPR036394">
    <property type="entry name" value="Ribosomal_uL22_sf"/>
</dbReference>
<dbReference type="NCBIfam" id="TIGR01044">
    <property type="entry name" value="rplV_bact"/>
    <property type="match status" value="1"/>
</dbReference>
<dbReference type="PANTHER" id="PTHR13501">
    <property type="entry name" value="CHLOROPLAST 50S RIBOSOMAL PROTEIN L22-RELATED"/>
    <property type="match status" value="1"/>
</dbReference>
<dbReference type="PANTHER" id="PTHR13501:SF10">
    <property type="entry name" value="LARGE RIBOSOMAL SUBUNIT PROTEIN UL22M"/>
    <property type="match status" value="1"/>
</dbReference>
<dbReference type="Pfam" id="PF00237">
    <property type="entry name" value="Ribosomal_L22"/>
    <property type="match status" value="1"/>
</dbReference>
<dbReference type="SUPFAM" id="SSF54843">
    <property type="entry name" value="Ribosomal protein L22"/>
    <property type="match status" value="1"/>
</dbReference>
<dbReference type="PROSITE" id="PS00464">
    <property type="entry name" value="RIBOSOMAL_L22"/>
    <property type="match status" value="1"/>
</dbReference>